<keyword id="KW-0378">Hydrolase</keyword>
<keyword id="KW-0460">Magnesium</keyword>
<keyword id="KW-0479">Metal-binding</keyword>
<keyword id="KW-1185">Reference proteome</keyword>
<gene>
    <name type="ordered locus">lmo0368</name>
</gene>
<name>Y368_LISMO</name>
<comment type="cofactor">
    <cofactor evidence="1">
        <name>Mg(2+)</name>
        <dbReference type="ChEBI" id="CHEBI:18420"/>
    </cofactor>
</comment>
<comment type="similarity">
    <text evidence="3">Belongs to the Nudix hydrolase family.</text>
</comment>
<evidence type="ECO:0000250" key="1"/>
<evidence type="ECO:0000255" key="2">
    <source>
        <dbReference type="PROSITE-ProRule" id="PRU00794"/>
    </source>
</evidence>
<evidence type="ECO:0000305" key="3"/>
<proteinExistence type="inferred from homology"/>
<sequence length="169" mass="19600">MEEWDLLNENRELTGKTHIRGEKLAPGELHLVIHVCIFNEKGQLLIQKRQKDKEGWPNYWDLSAAGSALKGETSQQAAEREVQEELGIMIDLSGTRAKFSYHFEEGFDDYWFITKDVQLSDLTLQKEEVADARFVTKEELEALRSSGEFIPYFFLNQLFNLKNATTIHF</sequence>
<feature type="chain" id="PRO_0000057084" description="Uncharacterized Nudix hydrolase lmo0368">
    <location>
        <begin position="1"/>
        <end position="169"/>
    </location>
</feature>
<feature type="domain" description="Nudix hydrolase" evidence="2">
    <location>
        <begin position="28"/>
        <end position="157"/>
    </location>
</feature>
<feature type="short sequence motif" description="Nudix box">
    <location>
        <begin position="65"/>
        <end position="87"/>
    </location>
</feature>
<feature type="binding site" evidence="1">
    <location>
        <position position="81"/>
    </location>
    <ligand>
        <name>Mg(2+)</name>
        <dbReference type="ChEBI" id="CHEBI:18420"/>
    </ligand>
</feature>
<feature type="binding site" evidence="1">
    <location>
        <position position="85"/>
    </location>
    <ligand>
        <name>Mg(2+)</name>
        <dbReference type="ChEBI" id="CHEBI:18420"/>
    </ligand>
</feature>
<protein>
    <recommendedName>
        <fullName>Uncharacterized Nudix hydrolase lmo0368</fullName>
        <ecNumber>3.6.-.-</ecNumber>
    </recommendedName>
</protein>
<dbReference type="EC" id="3.6.-.-"/>
<dbReference type="EMBL" id="AL591975">
    <property type="protein sequence ID" value="CAC98447.1"/>
    <property type="molecule type" value="Genomic_DNA"/>
</dbReference>
<dbReference type="PIR" id="AI1120">
    <property type="entry name" value="AI1120"/>
</dbReference>
<dbReference type="RefSeq" id="NP_463898.1">
    <property type="nucleotide sequence ID" value="NC_003210.1"/>
</dbReference>
<dbReference type="RefSeq" id="WP_009914285.1">
    <property type="nucleotide sequence ID" value="NZ_CP149495.1"/>
</dbReference>
<dbReference type="SMR" id="Q8Y9Z9"/>
<dbReference type="STRING" id="169963.gene:17593019"/>
<dbReference type="PaxDb" id="169963-lmo0368"/>
<dbReference type="EnsemblBacteria" id="CAC98447">
    <property type="protein sequence ID" value="CAC98447"/>
    <property type="gene ID" value="CAC98447"/>
</dbReference>
<dbReference type="GeneID" id="987618"/>
<dbReference type="KEGG" id="lmo:lmo0368"/>
<dbReference type="PATRIC" id="fig|169963.11.peg.380"/>
<dbReference type="eggNOG" id="COG1443">
    <property type="taxonomic scope" value="Bacteria"/>
</dbReference>
<dbReference type="HOGENOM" id="CLU_060552_1_1_9"/>
<dbReference type="OrthoDB" id="9786032at2"/>
<dbReference type="PhylomeDB" id="Q8Y9Z9"/>
<dbReference type="BioCyc" id="LMON169963:LMO0368-MONOMER"/>
<dbReference type="Proteomes" id="UP000000817">
    <property type="component" value="Chromosome"/>
</dbReference>
<dbReference type="GO" id="GO:0016787">
    <property type="term" value="F:hydrolase activity"/>
    <property type="evidence" value="ECO:0007669"/>
    <property type="project" value="UniProtKB-KW"/>
</dbReference>
<dbReference type="GO" id="GO:0046872">
    <property type="term" value="F:metal ion binding"/>
    <property type="evidence" value="ECO:0007669"/>
    <property type="project" value="UniProtKB-KW"/>
</dbReference>
<dbReference type="CDD" id="cd04693">
    <property type="entry name" value="NUDIX_Hydrolase"/>
    <property type="match status" value="1"/>
</dbReference>
<dbReference type="Gene3D" id="3.90.79.10">
    <property type="entry name" value="Nucleoside Triphosphate Pyrophosphohydrolase"/>
    <property type="match status" value="1"/>
</dbReference>
<dbReference type="InterPro" id="IPR015797">
    <property type="entry name" value="NUDIX_hydrolase-like_dom_sf"/>
</dbReference>
<dbReference type="InterPro" id="IPR020084">
    <property type="entry name" value="NUDIX_hydrolase_CS"/>
</dbReference>
<dbReference type="InterPro" id="IPR000086">
    <property type="entry name" value="NUDIX_hydrolase_dom"/>
</dbReference>
<dbReference type="PANTHER" id="PTHR10885">
    <property type="entry name" value="ISOPENTENYL-DIPHOSPHATE DELTA-ISOMERASE"/>
    <property type="match status" value="1"/>
</dbReference>
<dbReference type="PANTHER" id="PTHR10885:SF0">
    <property type="entry name" value="ISOPENTENYL-DIPHOSPHATE DELTA-ISOMERASE"/>
    <property type="match status" value="1"/>
</dbReference>
<dbReference type="Pfam" id="PF00293">
    <property type="entry name" value="NUDIX"/>
    <property type="match status" value="1"/>
</dbReference>
<dbReference type="SUPFAM" id="SSF55811">
    <property type="entry name" value="Nudix"/>
    <property type="match status" value="1"/>
</dbReference>
<dbReference type="PROSITE" id="PS51462">
    <property type="entry name" value="NUDIX"/>
    <property type="match status" value="1"/>
</dbReference>
<dbReference type="PROSITE" id="PS00893">
    <property type="entry name" value="NUDIX_BOX"/>
    <property type="match status" value="1"/>
</dbReference>
<accession>Q8Y9Z9</accession>
<organism>
    <name type="scientific">Listeria monocytogenes serovar 1/2a (strain ATCC BAA-679 / EGD-e)</name>
    <dbReference type="NCBI Taxonomy" id="169963"/>
    <lineage>
        <taxon>Bacteria</taxon>
        <taxon>Bacillati</taxon>
        <taxon>Bacillota</taxon>
        <taxon>Bacilli</taxon>
        <taxon>Bacillales</taxon>
        <taxon>Listeriaceae</taxon>
        <taxon>Listeria</taxon>
    </lineage>
</organism>
<reference key="1">
    <citation type="journal article" date="2001" name="Science">
        <title>Comparative genomics of Listeria species.</title>
        <authorList>
            <person name="Glaser P."/>
            <person name="Frangeul L."/>
            <person name="Buchrieser C."/>
            <person name="Rusniok C."/>
            <person name="Amend A."/>
            <person name="Baquero F."/>
            <person name="Berche P."/>
            <person name="Bloecker H."/>
            <person name="Brandt P."/>
            <person name="Chakraborty T."/>
            <person name="Charbit A."/>
            <person name="Chetouani F."/>
            <person name="Couve E."/>
            <person name="de Daruvar A."/>
            <person name="Dehoux P."/>
            <person name="Domann E."/>
            <person name="Dominguez-Bernal G."/>
            <person name="Duchaud E."/>
            <person name="Durant L."/>
            <person name="Dussurget O."/>
            <person name="Entian K.-D."/>
            <person name="Fsihi H."/>
            <person name="Garcia-del Portillo F."/>
            <person name="Garrido P."/>
            <person name="Gautier L."/>
            <person name="Goebel W."/>
            <person name="Gomez-Lopez N."/>
            <person name="Hain T."/>
            <person name="Hauf J."/>
            <person name="Jackson D."/>
            <person name="Jones L.-M."/>
            <person name="Kaerst U."/>
            <person name="Kreft J."/>
            <person name="Kuhn M."/>
            <person name="Kunst F."/>
            <person name="Kurapkat G."/>
            <person name="Madueno E."/>
            <person name="Maitournam A."/>
            <person name="Mata Vicente J."/>
            <person name="Ng E."/>
            <person name="Nedjari H."/>
            <person name="Nordsiek G."/>
            <person name="Novella S."/>
            <person name="de Pablos B."/>
            <person name="Perez-Diaz J.-C."/>
            <person name="Purcell R."/>
            <person name="Remmel B."/>
            <person name="Rose M."/>
            <person name="Schlueter T."/>
            <person name="Simoes N."/>
            <person name="Tierrez A."/>
            <person name="Vazquez-Boland J.-A."/>
            <person name="Voss H."/>
            <person name="Wehland J."/>
            <person name="Cossart P."/>
        </authorList>
    </citation>
    <scope>NUCLEOTIDE SEQUENCE [LARGE SCALE GENOMIC DNA]</scope>
    <source>
        <strain>ATCC BAA-679 / EGD-e</strain>
    </source>
</reference>